<name>NDK_MICAN</name>
<evidence type="ECO:0000255" key="1">
    <source>
        <dbReference type="HAMAP-Rule" id="MF_00451"/>
    </source>
</evidence>
<dbReference type="EC" id="2.7.4.6" evidence="1"/>
<dbReference type="EMBL" id="AP009552">
    <property type="protein sequence ID" value="BAG05496.1"/>
    <property type="molecule type" value="Genomic_DNA"/>
</dbReference>
<dbReference type="RefSeq" id="WP_002780036.1">
    <property type="nucleotide sequence ID" value="NC_010296.1"/>
</dbReference>
<dbReference type="SMR" id="B0JHT4"/>
<dbReference type="STRING" id="449447.MAE_56740"/>
<dbReference type="PaxDb" id="449447-MAE_56740"/>
<dbReference type="EnsemblBacteria" id="BAG05496">
    <property type="protein sequence ID" value="BAG05496"/>
    <property type="gene ID" value="MAE_56740"/>
</dbReference>
<dbReference type="GeneID" id="66707835"/>
<dbReference type="KEGG" id="mar:MAE_56740"/>
<dbReference type="eggNOG" id="COG0105">
    <property type="taxonomic scope" value="Bacteria"/>
</dbReference>
<dbReference type="HOGENOM" id="CLU_060216_6_3_3"/>
<dbReference type="BioCyc" id="MAER449447:MAE_RS24705-MONOMER"/>
<dbReference type="Proteomes" id="UP000001510">
    <property type="component" value="Chromosome"/>
</dbReference>
<dbReference type="GO" id="GO:0005737">
    <property type="term" value="C:cytoplasm"/>
    <property type="evidence" value="ECO:0007669"/>
    <property type="project" value="UniProtKB-SubCell"/>
</dbReference>
<dbReference type="GO" id="GO:0005524">
    <property type="term" value="F:ATP binding"/>
    <property type="evidence" value="ECO:0007669"/>
    <property type="project" value="UniProtKB-UniRule"/>
</dbReference>
<dbReference type="GO" id="GO:0046872">
    <property type="term" value="F:metal ion binding"/>
    <property type="evidence" value="ECO:0007669"/>
    <property type="project" value="UniProtKB-KW"/>
</dbReference>
<dbReference type="GO" id="GO:0004550">
    <property type="term" value="F:nucleoside diphosphate kinase activity"/>
    <property type="evidence" value="ECO:0007669"/>
    <property type="project" value="UniProtKB-UniRule"/>
</dbReference>
<dbReference type="GO" id="GO:0006241">
    <property type="term" value="P:CTP biosynthetic process"/>
    <property type="evidence" value="ECO:0007669"/>
    <property type="project" value="UniProtKB-UniRule"/>
</dbReference>
<dbReference type="GO" id="GO:0006183">
    <property type="term" value="P:GTP biosynthetic process"/>
    <property type="evidence" value="ECO:0007669"/>
    <property type="project" value="UniProtKB-UniRule"/>
</dbReference>
<dbReference type="GO" id="GO:0006228">
    <property type="term" value="P:UTP biosynthetic process"/>
    <property type="evidence" value="ECO:0007669"/>
    <property type="project" value="UniProtKB-UniRule"/>
</dbReference>
<dbReference type="CDD" id="cd04413">
    <property type="entry name" value="NDPk_I"/>
    <property type="match status" value="1"/>
</dbReference>
<dbReference type="FunFam" id="3.30.70.141:FF:000002">
    <property type="entry name" value="Nucleoside diphosphate kinase"/>
    <property type="match status" value="1"/>
</dbReference>
<dbReference type="Gene3D" id="3.30.70.141">
    <property type="entry name" value="Nucleoside diphosphate kinase-like domain"/>
    <property type="match status" value="1"/>
</dbReference>
<dbReference type="HAMAP" id="MF_00451">
    <property type="entry name" value="NDP_kinase"/>
    <property type="match status" value="1"/>
</dbReference>
<dbReference type="InterPro" id="IPR034907">
    <property type="entry name" value="NDK-like_dom"/>
</dbReference>
<dbReference type="InterPro" id="IPR036850">
    <property type="entry name" value="NDK-like_dom_sf"/>
</dbReference>
<dbReference type="InterPro" id="IPR001564">
    <property type="entry name" value="Nucleoside_diP_kinase"/>
</dbReference>
<dbReference type="InterPro" id="IPR023005">
    <property type="entry name" value="Nucleoside_diP_kinase_AS"/>
</dbReference>
<dbReference type="NCBIfam" id="NF001908">
    <property type="entry name" value="PRK00668.1"/>
    <property type="match status" value="1"/>
</dbReference>
<dbReference type="PANTHER" id="PTHR11349">
    <property type="entry name" value="NUCLEOSIDE DIPHOSPHATE KINASE"/>
    <property type="match status" value="1"/>
</dbReference>
<dbReference type="Pfam" id="PF00334">
    <property type="entry name" value="NDK"/>
    <property type="match status" value="1"/>
</dbReference>
<dbReference type="PRINTS" id="PR01243">
    <property type="entry name" value="NUCDPKINASE"/>
</dbReference>
<dbReference type="SMART" id="SM00562">
    <property type="entry name" value="NDK"/>
    <property type="match status" value="1"/>
</dbReference>
<dbReference type="SUPFAM" id="SSF54919">
    <property type="entry name" value="Nucleoside diphosphate kinase, NDK"/>
    <property type="match status" value="1"/>
</dbReference>
<dbReference type="PROSITE" id="PS00469">
    <property type="entry name" value="NDPK"/>
    <property type="match status" value="1"/>
</dbReference>
<dbReference type="PROSITE" id="PS51374">
    <property type="entry name" value="NDPK_LIKE"/>
    <property type="match status" value="1"/>
</dbReference>
<feature type="chain" id="PRO_1000080968" description="Nucleoside diphosphate kinase">
    <location>
        <begin position="1"/>
        <end position="149"/>
    </location>
</feature>
<feature type="active site" description="Pros-phosphohistidine intermediate" evidence="1">
    <location>
        <position position="115"/>
    </location>
</feature>
<feature type="binding site" evidence="1">
    <location>
        <position position="9"/>
    </location>
    <ligand>
        <name>ATP</name>
        <dbReference type="ChEBI" id="CHEBI:30616"/>
    </ligand>
</feature>
<feature type="binding site" evidence="1">
    <location>
        <position position="57"/>
    </location>
    <ligand>
        <name>ATP</name>
        <dbReference type="ChEBI" id="CHEBI:30616"/>
    </ligand>
</feature>
<feature type="binding site" evidence="1">
    <location>
        <position position="85"/>
    </location>
    <ligand>
        <name>ATP</name>
        <dbReference type="ChEBI" id="CHEBI:30616"/>
    </ligand>
</feature>
<feature type="binding site" evidence="1">
    <location>
        <position position="91"/>
    </location>
    <ligand>
        <name>ATP</name>
        <dbReference type="ChEBI" id="CHEBI:30616"/>
    </ligand>
</feature>
<feature type="binding site" evidence="1">
    <location>
        <position position="102"/>
    </location>
    <ligand>
        <name>ATP</name>
        <dbReference type="ChEBI" id="CHEBI:30616"/>
    </ligand>
</feature>
<feature type="binding site" evidence="1">
    <location>
        <position position="112"/>
    </location>
    <ligand>
        <name>ATP</name>
        <dbReference type="ChEBI" id="CHEBI:30616"/>
    </ligand>
</feature>
<accession>B0JHT4</accession>
<keyword id="KW-0067">ATP-binding</keyword>
<keyword id="KW-0963">Cytoplasm</keyword>
<keyword id="KW-0418">Kinase</keyword>
<keyword id="KW-0460">Magnesium</keyword>
<keyword id="KW-0479">Metal-binding</keyword>
<keyword id="KW-0546">Nucleotide metabolism</keyword>
<keyword id="KW-0547">Nucleotide-binding</keyword>
<keyword id="KW-0597">Phosphoprotein</keyword>
<keyword id="KW-0808">Transferase</keyword>
<proteinExistence type="inferred from homology"/>
<reference key="1">
    <citation type="journal article" date="2007" name="DNA Res.">
        <title>Complete genomic structure of the bloom-forming toxic cyanobacterium Microcystis aeruginosa NIES-843.</title>
        <authorList>
            <person name="Kaneko T."/>
            <person name="Nakajima N."/>
            <person name="Okamoto S."/>
            <person name="Suzuki I."/>
            <person name="Tanabe Y."/>
            <person name="Tamaoki M."/>
            <person name="Nakamura Y."/>
            <person name="Kasai F."/>
            <person name="Watanabe A."/>
            <person name="Kawashima K."/>
            <person name="Kishida Y."/>
            <person name="Ono A."/>
            <person name="Shimizu Y."/>
            <person name="Takahashi C."/>
            <person name="Minami C."/>
            <person name="Fujishiro T."/>
            <person name="Kohara M."/>
            <person name="Katoh M."/>
            <person name="Nakazaki N."/>
            <person name="Nakayama S."/>
            <person name="Yamada M."/>
            <person name="Tabata S."/>
            <person name="Watanabe M.M."/>
        </authorList>
    </citation>
    <scope>NUCLEOTIDE SEQUENCE [LARGE SCALE GENOMIC DNA]</scope>
    <source>
        <strain>NIES-843 / IAM M-247</strain>
    </source>
</reference>
<organism>
    <name type="scientific">Microcystis aeruginosa (strain NIES-843 / IAM M-2473)</name>
    <dbReference type="NCBI Taxonomy" id="449447"/>
    <lineage>
        <taxon>Bacteria</taxon>
        <taxon>Bacillati</taxon>
        <taxon>Cyanobacteriota</taxon>
        <taxon>Cyanophyceae</taxon>
        <taxon>Oscillatoriophycideae</taxon>
        <taxon>Chroococcales</taxon>
        <taxon>Microcystaceae</taxon>
        <taxon>Microcystis</taxon>
    </lineage>
</organism>
<sequence length="149" mass="16472">MERTFLMIKPDGVQRNLVGEIIQRFETKGFTLVGLKMMQVSSELAEKHYAVHKERPFFRSLVDFITSSPVVAMVWQGEGVIASARKIIGATNPLNAEPGTIRGDFGISVGRNLIHGSDGPDTAKDEVSLWFSDAELANWTPAITPWVVE</sequence>
<protein>
    <recommendedName>
        <fullName evidence="1">Nucleoside diphosphate kinase</fullName>
        <shortName evidence="1">NDK</shortName>
        <shortName evidence="1">NDP kinase</shortName>
        <ecNumber evidence="1">2.7.4.6</ecNumber>
    </recommendedName>
    <alternativeName>
        <fullName evidence="1">Nucleoside-2-P kinase</fullName>
    </alternativeName>
</protein>
<comment type="function">
    <text evidence="1">Major role in the synthesis of nucleoside triphosphates other than ATP. The ATP gamma phosphate is transferred to the NDP beta phosphate via a ping-pong mechanism, using a phosphorylated active-site intermediate.</text>
</comment>
<comment type="catalytic activity">
    <reaction evidence="1">
        <text>a 2'-deoxyribonucleoside 5'-diphosphate + ATP = a 2'-deoxyribonucleoside 5'-triphosphate + ADP</text>
        <dbReference type="Rhea" id="RHEA:44640"/>
        <dbReference type="ChEBI" id="CHEBI:30616"/>
        <dbReference type="ChEBI" id="CHEBI:61560"/>
        <dbReference type="ChEBI" id="CHEBI:73316"/>
        <dbReference type="ChEBI" id="CHEBI:456216"/>
        <dbReference type="EC" id="2.7.4.6"/>
    </reaction>
</comment>
<comment type="catalytic activity">
    <reaction evidence="1">
        <text>a ribonucleoside 5'-diphosphate + ATP = a ribonucleoside 5'-triphosphate + ADP</text>
        <dbReference type="Rhea" id="RHEA:18113"/>
        <dbReference type="ChEBI" id="CHEBI:30616"/>
        <dbReference type="ChEBI" id="CHEBI:57930"/>
        <dbReference type="ChEBI" id="CHEBI:61557"/>
        <dbReference type="ChEBI" id="CHEBI:456216"/>
        <dbReference type="EC" id="2.7.4.6"/>
    </reaction>
</comment>
<comment type="cofactor">
    <cofactor evidence="1">
        <name>Mg(2+)</name>
        <dbReference type="ChEBI" id="CHEBI:18420"/>
    </cofactor>
</comment>
<comment type="subunit">
    <text evidence="1">Homotetramer.</text>
</comment>
<comment type="subcellular location">
    <subcellularLocation>
        <location evidence="1">Cytoplasm</location>
    </subcellularLocation>
</comment>
<comment type="similarity">
    <text evidence="1">Belongs to the NDK family.</text>
</comment>
<gene>
    <name evidence="1" type="primary">ndk</name>
    <name type="ordered locus">MAE_56740</name>
</gene>